<keyword id="KW-0175">Coiled coil</keyword>
<keyword id="KW-1185">Reference proteome</keyword>
<comment type="sequence caution" evidence="3">
    <conflict type="erroneous gene model prediction">
        <sequence resource="EMBL-CDS" id="AAD23729"/>
    </conflict>
    <text>The predicted gene has been split into 2 genes: At2g42475 and At2g42480.</text>
</comment>
<dbReference type="EMBL" id="AC005956">
    <property type="protein sequence ID" value="AAD23729.1"/>
    <property type="status" value="ALT_SEQ"/>
    <property type="molecule type" value="Genomic_DNA"/>
</dbReference>
<dbReference type="EMBL" id="CP002685">
    <property type="protein sequence ID" value="ANM61422.1"/>
    <property type="molecule type" value="Genomic_DNA"/>
</dbReference>
<dbReference type="PIR" id="D84854">
    <property type="entry name" value="D84854"/>
</dbReference>
<dbReference type="RefSeq" id="NP_001323639.1">
    <property type="nucleotide sequence ID" value="NM_001336976.1"/>
</dbReference>
<dbReference type="SMR" id="P0DKG6"/>
<dbReference type="FunCoup" id="P0DKG6">
    <property type="interactions" value="45"/>
</dbReference>
<dbReference type="ProteomicsDB" id="238315"/>
<dbReference type="EnsemblPlants" id="AT2G42475.1">
    <property type="protein sequence ID" value="AT2G42475.1"/>
    <property type="gene ID" value="AT2G42475"/>
</dbReference>
<dbReference type="GeneID" id="28718349"/>
<dbReference type="Gramene" id="AT2G42475.1">
    <property type="protein sequence ID" value="AT2G42475.1"/>
    <property type="gene ID" value="AT2G42475"/>
</dbReference>
<dbReference type="KEGG" id="ath:AT2G42475"/>
<dbReference type="Araport" id="AT2G42475"/>
<dbReference type="TAIR" id="AT2G42475"/>
<dbReference type="InParanoid" id="P0DKG6"/>
<dbReference type="OMA" id="NSEGWIY"/>
<dbReference type="PRO" id="PR:P0DKG6"/>
<dbReference type="Proteomes" id="UP000006548">
    <property type="component" value="Chromosome 2"/>
</dbReference>
<dbReference type="ExpressionAtlas" id="P0DKG6">
    <property type="expression patterns" value="baseline and differential"/>
</dbReference>
<dbReference type="CDD" id="cd00121">
    <property type="entry name" value="MATH"/>
    <property type="match status" value="1"/>
</dbReference>
<dbReference type="Gene3D" id="2.60.210.10">
    <property type="entry name" value="Apoptosis, Tumor Necrosis Factor Receptor Associated Protein 2, Chain A"/>
    <property type="match status" value="1"/>
</dbReference>
<dbReference type="InterPro" id="IPR050804">
    <property type="entry name" value="MATH-CC_domain_protein"/>
</dbReference>
<dbReference type="InterPro" id="IPR002083">
    <property type="entry name" value="MATH/TRAF_dom"/>
</dbReference>
<dbReference type="InterPro" id="IPR008974">
    <property type="entry name" value="TRAF-like"/>
</dbReference>
<dbReference type="PANTHER" id="PTHR46236:SF12">
    <property type="entry name" value="MATH DOMAIN-CONTAINING PROTEIN"/>
    <property type="match status" value="1"/>
</dbReference>
<dbReference type="PANTHER" id="PTHR46236">
    <property type="entry name" value="TRAF-LIKE SUPERFAMILY PROTEIN"/>
    <property type="match status" value="1"/>
</dbReference>
<dbReference type="Pfam" id="PF22486">
    <property type="entry name" value="MATH_2"/>
    <property type="match status" value="1"/>
</dbReference>
<dbReference type="SMART" id="SM00061">
    <property type="entry name" value="MATH"/>
    <property type="match status" value="1"/>
</dbReference>
<dbReference type="SUPFAM" id="SSF49599">
    <property type="entry name" value="TRAF domain-like"/>
    <property type="match status" value="1"/>
</dbReference>
<dbReference type="PROSITE" id="PS50144">
    <property type="entry name" value="MATH"/>
    <property type="match status" value="1"/>
</dbReference>
<organism>
    <name type="scientific">Arabidopsis thaliana</name>
    <name type="common">Mouse-ear cress</name>
    <dbReference type="NCBI Taxonomy" id="3702"/>
    <lineage>
        <taxon>Eukaryota</taxon>
        <taxon>Viridiplantae</taxon>
        <taxon>Streptophyta</taxon>
        <taxon>Embryophyta</taxon>
        <taxon>Tracheophyta</taxon>
        <taxon>Spermatophyta</taxon>
        <taxon>Magnoliopsida</taxon>
        <taxon>eudicotyledons</taxon>
        <taxon>Gunneridae</taxon>
        <taxon>Pentapetalae</taxon>
        <taxon>rosids</taxon>
        <taxon>malvids</taxon>
        <taxon>Brassicales</taxon>
        <taxon>Brassicaceae</taxon>
        <taxon>Camelineae</taxon>
        <taxon>Arabidopsis</taxon>
    </lineage>
</organism>
<evidence type="ECO:0000255" key="1"/>
<evidence type="ECO:0000255" key="2">
    <source>
        <dbReference type="PROSITE-ProRule" id="PRU00129"/>
    </source>
</evidence>
<evidence type="ECO:0000305" key="3"/>
<reference key="1">
    <citation type="journal article" date="1999" name="Nature">
        <title>Sequence and analysis of chromosome 2 of the plant Arabidopsis thaliana.</title>
        <authorList>
            <person name="Lin X."/>
            <person name="Kaul S."/>
            <person name="Rounsley S.D."/>
            <person name="Shea T.P."/>
            <person name="Benito M.-I."/>
            <person name="Town C.D."/>
            <person name="Fujii C.Y."/>
            <person name="Mason T.M."/>
            <person name="Bowman C.L."/>
            <person name="Barnstead M.E."/>
            <person name="Feldblyum T.V."/>
            <person name="Buell C.R."/>
            <person name="Ketchum K.A."/>
            <person name="Lee J.J."/>
            <person name="Ronning C.M."/>
            <person name="Koo H.L."/>
            <person name="Moffat K.S."/>
            <person name="Cronin L.A."/>
            <person name="Shen M."/>
            <person name="Pai G."/>
            <person name="Van Aken S."/>
            <person name="Umayam L."/>
            <person name="Tallon L.J."/>
            <person name="Gill J.E."/>
            <person name="Adams M.D."/>
            <person name="Carrera A.J."/>
            <person name="Creasy T.H."/>
            <person name="Goodman H.M."/>
            <person name="Somerville C.R."/>
            <person name="Copenhaver G.P."/>
            <person name="Preuss D."/>
            <person name="Nierman W.C."/>
            <person name="White O."/>
            <person name="Eisen J.A."/>
            <person name="Salzberg S.L."/>
            <person name="Fraser C.M."/>
            <person name="Venter J.C."/>
        </authorList>
    </citation>
    <scope>NUCLEOTIDE SEQUENCE [LARGE SCALE GENOMIC DNA]</scope>
    <source>
        <strain>cv. Columbia</strain>
    </source>
</reference>
<reference key="2">
    <citation type="journal article" date="2017" name="Plant J.">
        <title>Araport11: a complete reannotation of the Arabidopsis thaliana reference genome.</title>
        <authorList>
            <person name="Cheng C.Y."/>
            <person name="Krishnakumar V."/>
            <person name="Chan A.P."/>
            <person name="Thibaud-Nissen F."/>
            <person name="Schobel S."/>
            <person name="Town C.D."/>
        </authorList>
    </citation>
    <scope>GENOME REANNOTATION</scope>
    <source>
        <strain>cv. Columbia</strain>
    </source>
</reference>
<reference key="3">
    <citation type="journal article" date="2010" name="Plant Physiol.">
        <title>RTM3, which controls long-distance movement of potyviruses, is a member of a new plant gene family encoding a meprin and TRAF homology domain-containing protein.</title>
        <authorList>
            <person name="Cosson P."/>
            <person name="Sofer L."/>
            <person name="Le Q.H."/>
            <person name="Leger V."/>
            <person name="Schurdi-Levraud V."/>
            <person name="Whitham S.A."/>
            <person name="Yamamoto M.L."/>
            <person name="Gopalan S."/>
            <person name="Le Gall O."/>
            <person name="Candresse T."/>
            <person name="Carrington J.C."/>
            <person name="Revers F."/>
        </authorList>
    </citation>
    <scope>GENE FAMILY</scope>
</reference>
<feature type="chain" id="PRO_0000429286" description="MATH domain and coiled-coil domain-containing protein At2g42475">
    <location>
        <begin position="1"/>
        <end position="359"/>
    </location>
</feature>
<feature type="domain" description="MATH" evidence="2">
    <location>
        <begin position="6"/>
        <end position="128"/>
    </location>
</feature>
<feature type="coiled-coil region" evidence="1">
    <location>
        <begin position="146"/>
        <end position="337"/>
    </location>
</feature>
<proteinExistence type="predicted"/>
<name>MCC09_ARATH</name>
<sequence length="359" mass="42230">MENHQKTSFTFEIENFSERKYLIWSPIFISGQCHWFVKVYPIKDNNYDHVSVYLHVANPQSLRPGWKRRAHFSLILSNQSGKEVKIPSDSCDLFCTELSSSYPKILPPIKLKEEGFLENDKLIITVEVKVVEVVHPGELTGKEMVEFKELQDLYNGVQQNKEVVKNCELMNMDMKQDSLKSNHHEVSLKDKKRDDADESRFQKLEERLKNLELMELDCLKSKLEEVSIKNKKADADRSRVQRLEERLKNLELMDLDCLKSKLELVSIKNKKADADRSRIQRLEERVKKLELMELDDLKSKLEEVSLERKKSDDAYRSRVYQLEECFKNLELMVLDFKVELDKKKDKSCDDGFLLVDEFA</sequence>
<accession>P0DKG6</accession>
<accession>Q9SLB2</accession>
<protein>
    <recommendedName>
        <fullName>MATH domain and coiled-coil domain-containing protein At2g42475</fullName>
    </recommendedName>
    <alternativeName>
        <fullName>RTM3-like protein At2g42475</fullName>
    </alternativeName>
</protein>
<gene>
    <name type="ordered locus">At2g42475</name>
    <name type="ORF">MHK10.20</name>
</gene>